<organism>
    <name type="scientific">Shigella flexneri</name>
    <dbReference type="NCBI Taxonomy" id="623"/>
    <lineage>
        <taxon>Bacteria</taxon>
        <taxon>Pseudomonadati</taxon>
        <taxon>Pseudomonadota</taxon>
        <taxon>Gammaproteobacteria</taxon>
        <taxon>Enterobacterales</taxon>
        <taxon>Enterobacteriaceae</taxon>
        <taxon>Shigella</taxon>
    </lineage>
</organism>
<name>PSTC_SHIFL</name>
<gene>
    <name type="primary">pstC</name>
    <name type="ordered locus">SF3728</name>
    <name type="ordered locus">S4044</name>
</gene>
<keyword id="KW-0997">Cell inner membrane</keyword>
<keyword id="KW-1003">Cell membrane</keyword>
<keyword id="KW-0472">Membrane</keyword>
<keyword id="KW-0592">Phosphate transport</keyword>
<keyword id="KW-1185">Reference proteome</keyword>
<keyword id="KW-0812">Transmembrane</keyword>
<keyword id="KW-1133">Transmembrane helix</keyword>
<keyword id="KW-0813">Transport</keyword>
<feature type="chain" id="PRO_0000060212" description="Phosphate transport system permease protein PstC">
    <location>
        <begin position="1"/>
        <end position="319"/>
    </location>
</feature>
<feature type="topological domain" description="Cytoplasmic" evidence="2">
    <location>
        <begin position="1"/>
        <end position="24"/>
    </location>
</feature>
<feature type="transmembrane region" description="Helical" evidence="3">
    <location>
        <begin position="25"/>
        <end position="44"/>
    </location>
</feature>
<feature type="topological domain" description="Periplasmic" evidence="2">
    <location>
        <begin position="45"/>
        <end position="74"/>
    </location>
</feature>
<feature type="transmembrane region" description="Helical" evidence="3">
    <location>
        <begin position="75"/>
        <end position="94"/>
    </location>
</feature>
<feature type="topological domain" description="Cytoplasmic" evidence="2">
    <location>
        <begin position="95"/>
        <end position="117"/>
    </location>
</feature>
<feature type="transmembrane region" description="Helical" evidence="3">
    <location>
        <begin position="118"/>
        <end position="137"/>
    </location>
</feature>
<feature type="topological domain" description="Periplasmic" evidence="2">
    <location>
        <begin position="138"/>
        <end position="167"/>
    </location>
</feature>
<feature type="transmembrane region" description="Helical" evidence="3">
    <location>
        <begin position="168"/>
        <end position="187"/>
    </location>
</feature>
<feature type="topological domain" description="Cytoplasmic" evidence="2">
    <location>
        <begin position="188"/>
        <end position="232"/>
    </location>
</feature>
<feature type="transmembrane region" description="Helical" evidence="3">
    <location>
        <begin position="233"/>
        <end position="252"/>
    </location>
</feature>
<feature type="topological domain" description="Periplasmic" evidence="2">
    <location>
        <begin position="253"/>
        <end position="283"/>
    </location>
</feature>
<feature type="transmembrane region" description="Helical" evidence="3">
    <location>
        <begin position="284"/>
        <end position="303"/>
    </location>
</feature>
<feature type="topological domain" description="Cytoplasmic" evidence="2">
    <location>
        <begin position="304"/>
        <end position="319"/>
    </location>
</feature>
<feature type="domain" description="ABC transmembrane type-1" evidence="3">
    <location>
        <begin position="75"/>
        <end position="305"/>
    </location>
</feature>
<feature type="sequence conflict" description="In Ref. 2; AAP19024." evidence="4" ref="2">
    <location>
        <begin position="304"/>
        <end position="319"/>
    </location>
</feature>
<dbReference type="EMBL" id="AE005674">
    <property type="protein sequence ID" value="AAN45174.1"/>
    <property type="status" value="ALT_INIT"/>
    <property type="molecule type" value="Genomic_DNA"/>
</dbReference>
<dbReference type="EMBL" id="AE014073">
    <property type="protein sequence ID" value="AAP19024.1"/>
    <property type="molecule type" value="Genomic_DNA"/>
</dbReference>
<dbReference type="RefSeq" id="NP_709467.3">
    <property type="nucleotide sequence ID" value="NC_004337.2"/>
</dbReference>
<dbReference type="RefSeq" id="WP_000741620.1">
    <property type="nucleotide sequence ID" value="NZ_WPGW01000131.1"/>
</dbReference>
<dbReference type="STRING" id="198214.SF3728"/>
<dbReference type="PaxDb" id="198214-SF3728"/>
<dbReference type="GeneID" id="1026124"/>
<dbReference type="GeneID" id="93778214"/>
<dbReference type="KEGG" id="sfl:SF3728"/>
<dbReference type="KEGG" id="sfx:S4044"/>
<dbReference type="PATRIC" id="fig|198214.7.peg.4401"/>
<dbReference type="HOGENOM" id="CLU_033621_1_3_6"/>
<dbReference type="Proteomes" id="UP000001006">
    <property type="component" value="Chromosome"/>
</dbReference>
<dbReference type="Proteomes" id="UP000002673">
    <property type="component" value="Chromosome"/>
</dbReference>
<dbReference type="GO" id="GO:0005886">
    <property type="term" value="C:plasma membrane"/>
    <property type="evidence" value="ECO:0007669"/>
    <property type="project" value="UniProtKB-SubCell"/>
</dbReference>
<dbReference type="GO" id="GO:0005315">
    <property type="term" value="F:phosphate transmembrane transporter activity"/>
    <property type="evidence" value="ECO:0007669"/>
    <property type="project" value="InterPro"/>
</dbReference>
<dbReference type="GO" id="GO:0006817">
    <property type="term" value="P:phosphate ion transport"/>
    <property type="evidence" value="ECO:0007669"/>
    <property type="project" value="UniProtKB-KW"/>
</dbReference>
<dbReference type="CDD" id="cd06261">
    <property type="entry name" value="TM_PBP2"/>
    <property type="match status" value="1"/>
</dbReference>
<dbReference type="Gene3D" id="1.10.3720.10">
    <property type="entry name" value="MetI-like"/>
    <property type="match status" value="1"/>
</dbReference>
<dbReference type="InterPro" id="IPR000515">
    <property type="entry name" value="MetI-like"/>
</dbReference>
<dbReference type="InterPro" id="IPR035906">
    <property type="entry name" value="MetI-like_sf"/>
</dbReference>
<dbReference type="InterPro" id="IPR011864">
    <property type="entry name" value="Phosphate_PstC"/>
</dbReference>
<dbReference type="InterPro" id="IPR051124">
    <property type="entry name" value="Phosphate_Transport_Permease"/>
</dbReference>
<dbReference type="NCBIfam" id="TIGR02138">
    <property type="entry name" value="phosphate_pstC"/>
    <property type="match status" value="1"/>
</dbReference>
<dbReference type="NCBIfam" id="NF008435">
    <property type="entry name" value="PRK11275.1"/>
    <property type="match status" value="1"/>
</dbReference>
<dbReference type="PANTHER" id="PTHR30425">
    <property type="entry name" value="PHOSPHATE TRANSPORT SYSTEM PERMEASE PROTEIN PST"/>
    <property type="match status" value="1"/>
</dbReference>
<dbReference type="PANTHER" id="PTHR30425:SF1">
    <property type="entry name" value="PHOSPHATE TRANSPORT SYSTEM PERMEASE PROTEIN PSTC"/>
    <property type="match status" value="1"/>
</dbReference>
<dbReference type="Pfam" id="PF00528">
    <property type="entry name" value="BPD_transp_1"/>
    <property type="match status" value="1"/>
</dbReference>
<dbReference type="SUPFAM" id="SSF161098">
    <property type="entry name" value="MetI-like"/>
    <property type="match status" value="1"/>
</dbReference>
<dbReference type="PROSITE" id="PS50928">
    <property type="entry name" value="ABC_TM1"/>
    <property type="match status" value="1"/>
</dbReference>
<accession>P0AGI0</accession>
<accession>P07653</accession>
<evidence type="ECO:0000250" key="1"/>
<evidence type="ECO:0000255" key="2"/>
<evidence type="ECO:0000255" key="3">
    <source>
        <dbReference type="PROSITE-ProRule" id="PRU00441"/>
    </source>
</evidence>
<evidence type="ECO:0000305" key="4"/>
<protein>
    <recommendedName>
        <fullName>Phosphate transport system permease protein PstC</fullName>
    </recommendedName>
</protein>
<proteinExistence type="inferred from homology"/>
<reference key="1">
    <citation type="journal article" date="2002" name="Nucleic Acids Res.">
        <title>Genome sequence of Shigella flexneri 2a: insights into pathogenicity through comparison with genomes of Escherichia coli K12 and O157.</title>
        <authorList>
            <person name="Jin Q."/>
            <person name="Yuan Z."/>
            <person name="Xu J."/>
            <person name="Wang Y."/>
            <person name="Shen Y."/>
            <person name="Lu W."/>
            <person name="Wang J."/>
            <person name="Liu H."/>
            <person name="Yang J."/>
            <person name="Yang F."/>
            <person name="Zhang X."/>
            <person name="Zhang J."/>
            <person name="Yang G."/>
            <person name="Wu H."/>
            <person name="Qu D."/>
            <person name="Dong J."/>
            <person name="Sun L."/>
            <person name="Xue Y."/>
            <person name="Zhao A."/>
            <person name="Gao Y."/>
            <person name="Zhu J."/>
            <person name="Kan B."/>
            <person name="Ding K."/>
            <person name="Chen S."/>
            <person name="Cheng H."/>
            <person name="Yao Z."/>
            <person name="He B."/>
            <person name="Chen R."/>
            <person name="Ma D."/>
            <person name="Qiang B."/>
            <person name="Wen Y."/>
            <person name="Hou Y."/>
            <person name="Yu J."/>
        </authorList>
    </citation>
    <scope>NUCLEOTIDE SEQUENCE [LARGE SCALE GENOMIC DNA]</scope>
    <source>
        <strain>301 / Serotype 2a</strain>
    </source>
</reference>
<reference key="2">
    <citation type="journal article" date="2003" name="Infect. Immun.">
        <title>Complete genome sequence and comparative genomics of Shigella flexneri serotype 2a strain 2457T.</title>
        <authorList>
            <person name="Wei J."/>
            <person name="Goldberg M.B."/>
            <person name="Burland V."/>
            <person name="Venkatesan M.M."/>
            <person name="Deng W."/>
            <person name="Fournier G."/>
            <person name="Mayhew G.F."/>
            <person name="Plunkett G. III"/>
            <person name="Rose D.J."/>
            <person name="Darling A."/>
            <person name="Mau B."/>
            <person name="Perna N.T."/>
            <person name="Payne S.M."/>
            <person name="Runyen-Janecky L.J."/>
            <person name="Zhou S."/>
            <person name="Schwartz D.C."/>
            <person name="Blattner F.R."/>
        </authorList>
    </citation>
    <scope>NUCLEOTIDE SEQUENCE [LARGE SCALE GENOMIC DNA]</scope>
    <source>
        <strain>ATCC 700930 / 2457T / Serotype 2a</strain>
    </source>
</reference>
<comment type="function">
    <text evidence="1">Part of the binding-protein-dependent transport system for phosphate; probably responsible for the translocation of the substrate across the membrane.</text>
</comment>
<comment type="subcellular location">
    <subcellularLocation>
        <location evidence="1">Cell inner membrane</location>
        <topology evidence="3">Multi-pass membrane protein</topology>
    </subcellularLocation>
</comment>
<comment type="similarity">
    <text evidence="4">Belongs to the binding-protein-dependent transport system permease family. CysTW subfamily.</text>
</comment>
<comment type="sequence caution" evidence="4">
    <conflict type="erroneous initiation">
        <sequence resource="EMBL-CDS" id="AAN45174"/>
    </conflict>
</comment>
<sequence length="319" mass="34121">MAATKPAFNPPGKKGDIIFSVLVKLAALIVLLMLGGIIVSLIISSWPSIQKFGLAFLWTKEWDAPNDIYGALVPIYGTLVTSFIALLIAVPVSFGIALFLTELAPGWLKRPLGIAIELLAAIPSIVYGMWGLFIFAPLFAVYFQEPVGNIMSNIPIVGALFSGPAFGIGILAAGVILAIMIIPYIAAVMRDVFEQTPVMMKESAYGIGCTTWEVIWRIVLPFTKNGVIGGIMLGLGRALGETMAVTFIIGNTYQLDSASLYMPGNSITSALANEFAEAESGLHVAALMELGLILFVITFIVLAASKFMIMRLAKNEGAR</sequence>